<evidence type="ECO:0000305" key="1"/>
<reference key="1">
    <citation type="journal article" date="1998" name="J. Bacteriol.">
        <title>Cloning of the Lactococcus lactis adhE gene, encoding a multifunctional alcohol dehydrogenase, by complementation of a fermentative mutant of Escherichia coli.</title>
        <authorList>
            <person name="Arnau J."/>
            <person name="Jorgensen F."/>
            <person name="Madsen S.M."/>
            <person name="Vrang A."/>
            <person name="Israelsen H."/>
        </authorList>
    </citation>
    <scope>NUCLEOTIDE SEQUENCE [GENOMIC DNA]</scope>
    <source>
        <strain>Biovar diacetylactis DB1341</strain>
    </source>
</reference>
<reference key="2">
    <citation type="journal article" date="2001" name="Genome Res.">
        <title>The complete genome sequence of the lactic acid bacterium Lactococcus lactis ssp. lactis IL1403.</title>
        <authorList>
            <person name="Bolotin A."/>
            <person name="Wincker P."/>
            <person name="Mauger S."/>
            <person name="Jaillon O."/>
            <person name="Malarme K."/>
            <person name="Weissenbach J."/>
            <person name="Ehrlich S.D."/>
            <person name="Sorokin A."/>
        </authorList>
    </citation>
    <scope>NUCLEOTIDE SEQUENCE [LARGE SCALE GENOMIC DNA]</scope>
    <source>
        <strain>IL1403</strain>
    </source>
</reference>
<keyword id="KW-1185">Reference proteome</keyword>
<comment type="similarity">
    <text evidence="1">Belongs to the cycloisomerase 2 family.</text>
</comment>
<name>YWCC_LACLA</name>
<accession>O86271</accession>
<organism>
    <name type="scientific">Lactococcus lactis subsp. lactis (strain IL1403)</name>
    <name type="common">Streptococcus lactis</name>
    <dbReference type="NCBI Taxonomy" id="272623"/>
    <lineage>
        <taxon>Bacteria</taxon>
        <taxon>Bacillati</taxon>
        <taxon>Bacillota</taxon>
        <taxon>Bacilli</taxon>
        <taxon>Lactobacillales</taxon>
        <taxon>Streptococcaceae</taxon>
        <taxon>Lactococcus</taxon>
    </lineage>
</organism>
<dbReference type="EMBL" id="AJ001008">
    <property type="protein sequence ID" value="CAA04466.1"/>
    <property type="molecule type" value="Genomic_DNA"/>
</dbReference>
<dbReference type="EMBL" id="AE005176">
    <property type="protein sequence ID" value="AAK06252.1"/>
    <property type="molecule type" value="Genomic_DNA"/>
</dbReference>
<dbReference type="PIR" id="B86894">
    <property type="entry name" value="B86894"/>
</dbReference>
<dbReference type="RefSeq" id="NP_268311.1">
    <property type="nucleotide sequence ID" value="NC_002662.1"/>
</dbReference>
<dbReference type="RefSeq" id="WP_010906341.1">
    <property type="nucleotide sequence ID" value="NC_002662.1"/>
</dbReference>
<dbReference type="SMR" id="O86271"/>
<dbReference type="PaxDb" id="272623-L11851"/>
<dbReference type="EnsemblBacteria" id="AAK06252">
    <property type="protein sequence ID" value="AAK06252"/>
    <property type="gene ID" value="L11851"/>
</dbReference>
<dbReference type="KEGG" id="lla:L11851"/>
<dbReference type="PATRIC" id="fig|272623.7.peg.2313"/>
<dbReference type="eggNOG" id="COG2706">
    <property type="taxonomic scope" value="Bacteria"/>
</dbReference>
<dbReference type="HOGENOM" id="CLU_038716_3_1_9"/>
<dbReference type="OrthoDB" id="9790815at2"/>
<dbReference type="Proteomes" id="UP000002196">
    <property type="component" value="Chromosome"/>
</dbReference>
<dbReference type="GO" id="GO:0005829">
    <property type="term" value="C:cytosol"/>
    <property type="evidence" value="ECO:0007669"/>
    <property type="project" value="TreeGrafter"/>
</dbReference>
<dbReference type="GO" id="GO:0017057">
    <property type="term" value="F:6-phosphogluconolactonase activity"/>
    <property type="evidence" value="ECO:0007669"/>
    <property type="project" value="TreeGrafter"/>
</dbReference>
<dbReference type="Gene3D" id="2.130.10.10">
    <property type="entry name" value="YVTN repeat-like/Quinoprotein amine dehydrogenase"/>
    <property type="match status" value="1"/>
</dbReference>
<dbReference type="InterPro" id="IPR050282">
    <property type="entry name" value="Cycloisomerase_2"/>
</dbReference>
<dbReference type="InterPro" id="IPR011048">
    <property type="entry name" value="Haem_d1_sf"/>
</dbReference>
<dbReference type="InterPro" id="IPR019405">
    <property type="entry name" value="Lactonase_7-beta_prop"/>
</dbReference>
<dbReference type="InterPro" id="IPR015943">
    <property type="entry name" value="WD40/YVTN_repeat-like_dom_sf"/>
</dbReference>
<dbReference type="PANTHER" id="PTHR30344:SF1">
    <property type="entry name" value="6-PHOSPHOGLUCONOLACTONASE"/>
    <property type="match status" value="1"/>
</dbReference>
<dbReference type="PANTHER" id="PTHR30344">
    <property type="entry name" value="6-PHOSPHOGLUCONOLACTONASE-RELATED"/>
    <property type="match status" value="1"/>
</dbReference>
<dbReference type="Pfam" id="PF10282">
    <property type="entry name" value="Lactonase"/>
    <property type="match status" value="1"/>
</dbReference>
<dbReference type="SUPFAM" id="SSF51004">
    <property type="entry name" value="C-terminal (heme d1) domain of cytochrome cd1-nitrite reductase"/>
    <property type="match status" value="1"/>
</dbReference>
<gene>
    <name type="primary">ywcC</name>
    <name type="ordered locus">LL2154</name>
    <name type="ORF">L11851</name>
</gene>
<sequence length="341" mass="37288">MKEKILLGGYTKRVSKGVYSVLLDTKAAELSSLNEVAAVQNPTYITLDEKGHLYTCAADSNGGGIAAFDFDGETATHLGNVTTTGAPLCYVAVDEARQLVYGANYHLGEVRVYKIQANGSLRLTDTVKHTGSGPRPEQASSHVHYSDLTPDGRLVTCDLGTDEVTVYDVIGEGKLNIATIYRAEKGMGARHITFHPNGKIAYLVGELNSTIEVLSYNEEKGRFARLQTISTLPEDYHGANGVAAIRISSDGKFLYTSNRGHDSLTTYKVSPLGTKLETIGWTNTEGHIPRDFNFNKTEDYIIVAHQESDNLSLFLRDKKTGTLTLEQKDFYAPEITCVLPL</sequence>
<feature type="chain" id="PRO_0000171145" description="Uncharacterized protein YwcC">
    <location>
        <begin position="1"/>
        <end position="341"/>
    </location>
</feature>
<protein>
    <recommendedName>
        <fullName>Uncharacterized protein YwcC</fullName>
    </recommendedName>
</protein>
<proteinExistence type="inferred from homology"/>